<reference key="1">
    <citation type="journal article" date="2008" name="Biochem. J.">
        <title>Molecular identification of three Arabidopsis thaliana mitochondrial dicarboxylate carrier isoforms: organ distribution, bacterial expression, reconstitution into liposomes and functional characterization.</title>
        <authorList>
            <person name="Palmieri L."/>
            <person name="Picault N."/>
            <person name="Arrigoni R."/>
            <person name="Besin E."/>
            <person name="Palmieri F."/>
            <person name="Hodges M."/>
        </authorList>
    </citation>
    <scope>NUCLEOTIDE SEQUENCE [MRNA]</scope>
    <scope>FUNCTION</scope>
    <source>
        <strain>cv. Columbia</strain>
        <tissue>Flower bud</tissue>
    </source>
</reference>
<reference key="2">
    <citation type="journal article" date="2000" name="Nature">
        <title>Sequence and analysis of chromosome 5 of the plant Arabidopsis thaliana.</title>
        <authorList>
            <person name="Tabata S."/>
            <person name="Kaneko T."/>
            <person name="Nakamura Y."/>
            <person name="Kotani H."/>
            <person name="Kato T."/>
            <person name="Asamizu E."/>
            <person name="Miyajima N."/>
            <person name="Sasamoto S."/>
            <person name="Kimura T."/>
            <person name="Hosouchi T."/>
            <person name="Kawashima K."/>
            <person name="Kohara M."/>
            <person name="Matsumoto M."/>
            <person name="Matsuno A."/>
            <person name="Muraki A."/>
            <person name="Nakayama S."/>
            <person name="Nakazaki N."/>
            <person name="Naruo K."/>
            <person name="Okumura S."/>
            <person name="Shinpo S."/>
            <person name="Takeuchi C."/>
            <person name="Wada T."/>
            <person name="Watanabe A."/>
            <person name="Yamada M."/>
            <person name="Yasuda M."/>
            <person name="Sato S."/>
            <person name="de la Bastide M."/>
            <person name="Huang E."/>
            <person name="Spiegel L."/>
            <person name="Gnoj L."/>
            <person name="O'Shaughnessy A."/>
            <person name="Preston R."/>
            <person name="Habermann K."/>
            <person name="Murray J."/>
            <person name="Johnson D."/>
            <person name="Rohlfing T."/>
            <person name="Nelson J."/>
            <person name="Stoneking T."/>
            <person name="Pepin K."/>
            <person name="Spieth J."/>
            <person name="Sekhon M."/>
            <person name="Armstrong J."/>
            <person name="Becker M."/>
            <person name="Belter E."/>
            <person name="Cordum H."/>
            <person name="Cordes M."/>
            <person name="Courtney L."/>
            <person name="Courtney W."/>
            <person name="Dante M."/>
            <person name="Du H."/>
            <person name="Edwards J."/>
            <person name="Fryman J."/>
            <person name="Haakensen B."/>
            <person name="Lamar E."/>
            <person name="Latreille P."/>
            <person name="Leonard S."/>
            <person name="Meyer R."/>
            <person name="Mulvaney E."/>
            <person name="Ozersky P."/>
            <person name="Riley A."/>
            <person name="Strowmatt C."/>
            <person name="Wagner-McPherson C."/>
            <person name="Wollam A."/>
            <person name="Yoakum M."/>
            <person name="Bell M."/>
            <person name="Dedhia N."/>
            <person name="Parnell L."/>
            <person name="Shah R."/>
            <person name="Rodriguez M."/>
            <person name="Hoon See L."/>
            <person name="Vil D."/>
            <person name="Baker J."/>
            <person name="Kirchoff K."/>
            <person name="Toth K."/>
            <person name="King L."/>
            <person name="Bahret A."/>
            <person name="Miller B."/>
            <person name="Marra M.A."/>
            <person name="Martienssen R."/>
            <person name="McCombie W.R."/>
            <person name="Wilson R.K."/>
            <person name="Murphy G."/>
            <person name="Bancroft I."/>
            <person name="Volckaert G."/>
            <person name="Wambutt R."/>
            <person name="Duesterhoeft A."/>
            <person name="Stiekema W."/>
            <person name="Pohl T."/>
            <person name="Entian K.-D."/>
            <person name="Terryn N."/>
            <person name="Hartley N."/>
            <person name="Bent E."/>
            <person name="Johnson S."/>
            <person name="Langham S.-A."/>
            <person name="McCullagh B."/>
            <person name="Robben J."/>
            <person name="Grymonprez B."/>
            <person name="Zimmermann W."/>
            <person name="Ramsperger U."/>
            <person name="Wedler H."/>
            <person name="Balke K."/>
            <person name="Wedler E."/>
            <person name="Peters S."/>
            <person name="van Staveren M."/>
            <person name="Dirkse W."/>
            <person name="Mooijman P."/>
            <person name="Klein Lankhorst R."/>
            <person name="Weitzenegger T."/>
            <person name="Bothe G."/>
            <person name="Rose M."/>
            <person name="Hauf J."/>
            <person name="Berneiser S."/>
            <person name="Hempel S."/>
            <person name="Feldpausch M."/>
            <person name="Lamberth S."/>
            <person name="Villarroel R."/>
            <person name="Gielen J."/>
            <person name="Ardiles W."/>
            <person name="Bents O."/>
            <person name="Lemcke K."/>
            <person name="Kolesov G."/>
            <person name="Mayer K.F.X."/>
            <person name="Rudd S."/>
            <person name="Schoof H."/>
            <person name="Schueller C."/>
            <person name="Zaccaria P."/>
            <person name="Mewes H.-W."/>
            <person name="Bevan M."/>
            <person name="Fransz P.F."/>
        </authorList>
    </citation>
    <scope>NUCLEOTIDE SEQUENCE [LARGE SCALE GENOMIC DNA]</scope>
    <source>
        <strain>cv. Columbia</strain>
    </source>
</reference>
<reference key="3">
    <citation type="journal article" date="2017" name="Plant J.">
        <title>Araport11: a complete reannotation of the Arabidopsis thaliana reference genome.</title>
        <authorList>
            <person name="Cheng C.Y."/>
            <person name="Krishnakumar V."/>
            <person name="Chan A.P."/>
            <person name="Thibaud-Nissen F."/>
            <person name="Schobel S."/>
            <person name="Town C.D."/>
        </authorList>
    </citation>
    <scope>GENOME REANNOTATION</scope>
    <source>
        <strain>cv. Columbia</strain>
    </source>
</reference>
<reference key="4">
    <citation type="submission" date="2008-06" db="EMBL/GenBank/DDBJ databases">
        <title>Arabidopsis ORF clones.</title>
        <authorList>
            <person name="De Los Reyes C."/>
            <person name="Quan R."/>
            <person name="Chen H."/>
            <person name="Bautista V.R."/>
            <person name="Kim C.J."/>
            <person name="Ecker J.R."/>
        </authorList>
    </citation>
    <scope>NUCLEOTIDE SEQUENCE [LARGE SCALE MRNA]</scope>
    <source>
        <strain>cv. Columbia</strain>
    </source>
</reference>
<reference key="5">
    <citation type="journal article" date="2006" name="J. Exp. Bot.">
        <title>The plant energy-dissipating mitochondrial systems: depicting the genomic structure and the expression profiles of the gene families of uncoupling protein and alternative oxidase in monocots and dicots.</title>
        <authorList>
            <person name="Borecky J."/>
            <person name="Nogueira F.T."/>
            <person name="de Oliveira K.A."/>
            <person name="Maia I.G."/>
            <person name="Vercesi A.E."/>
            <person name="Arruda P."/>
        </authorList>
    </citation>
    <scope>GENE FAMILY</scope>
    <scope>NOMENCLATURE</scope>
</reference>
<comment type="function">
    <text evidence="1 3">PUMPS are mitochondrial transporter proteins that create proton leaks across the inner mitochondrial membrane, thus uncoupling oxidative phosphorylation. This leads to a decrease in the efficiency of oxidative phosphorylation and an increase in heat production. May be involved in protecting plant cells against oxidative stress damage (By similarity). Recombinant PUMP6, reconstituted into liposomes, transports a wide range of dicarboxylic acids including malate, oxaloacetate and succinate as well as phosphate, sulfate and thiosulfate. However, it is unknown if these transports are of any biological significance in vivo.</text>
</comment>
<comment type="subcellular location">
    <subcellularLocation>
        <location evidence="1">Mitochondrion inner membrane</location>
        <topology evidence="1">Multi-pass membrane protein</topology>
    </subcellularLocation>
</comment>
<comment type="similarity">
    <text evidence="4">Belongs to the mitochondrial carrier (TC 2.A.29) family.</text>
</comment>
<accession>Q9FY68</accession>
<gene>
    <name type="primary">PUMP6</name>
    <name type="synonym">DIC3</name>
    <name type="synonym">UCP6</name>
    <name type="ordered locus">At5g09470</name>
    <name type="ORF">T5E8.270</name>
</gene>
<evidence type="ECO:0000250" key="1"/>
<evidence type="ECO:0000255" key="2"/>
<evidence type="ECO:0000269" key="3">
    <source>
    </source>
</evidence>
<evidence type="ECO:0000305" key="4"/>
<keyword id="KW-0472">Membrane</keyword>
<keyword id="KW-0496">Mitochondrion</keyword>
<keyword id="KW-0999">Mitochondrion inner membrane</keyword>
<keyword id="KW-1185">Reference proteome</keyword>
<keyword id="KW-0677">Repeat</keyword>
<keyword id="KW-0346">Stress response</keyword>
<keyword id="KW-0812">Transmembrane</keyword>
<keyword id="KW-1133">Transmembrane helix</keyword>
<keyword id="KW-0813">Transport</keyword>
<dbReference type="EMBL" id="AM236861">
    <property type="protein sequence ID" value="CAJ86453.1"/>
    <property type="molecule type" value="mRNA"/>
</dbReference>
<dbReference type="EMBL" id="AL391712">
    <property type="protein sequence ID" value="CAC05473.1"/>
    <property type="molecule type" value="Genomic_DNA"/>
</dbReference>
<dbReference type="EMBL" id="CP002688">
    <property type="protein sequence ID" value="AED91400.1"/>
    <property type="molecule type" value="Genomic_DNA"/>
</dbReference>
<dbReference type="EMBL" id="BT033087">
    <property type="protein sequence ID" value="ACF04810.1"/>
    <property type="molecule type" value="mRNA"/>
</dbReference>
<dbReference type="RefSeq" id="NP_196509.1">
    <property type="nucleotide sequence ID" value="NM_120984.2"/>
</dbReference>
<dbReference type="SMR" id="Q9FY68"/>
<dbReference type="BioGRID" id="16084">
    <property type="interactions" value="3"/>
</dbReference>
<dbReference type="FunCoup" id="Q9FY68">
    <property type="interactions" value="569"/>
</dbReference>
<dbReference type="IntAct" id="Q9FY68">
    <property type="interactions" value="1"/>
</dbReference>
<dbReference type="STRING" id="3702.Q9FY68"/>
<dbReference type="PaxDb" id="3702-AT5G09470.1"/>
<dbReference type="ProteomicsDB" id="226126"/>
<dbReference type="EnsemblPlants" id="AT5G09470.1">
    <property type="protein sequence ID" value="AT5G09470.1"/>
    <property type="gene ID" value="AT5G09470"/>
</dbReference>
<dbReference type="GeneID" id="830806"/>
<dbReference type="Gramene" id="AT5G09470.1">
    <property type="protein sequence ID" value="AT5G09470.1"/>
    <property type="gene ID" value="AT5G09470"/>
</dbReference>
<dbReference type="KEGG" id="ath:AT5G09470"/>
<dbReference type="Araport" id="AT5G09470"/>
<dbReference type="TAIR" id="AT5G09470">
    <property type="gene designation" value="DIC3"/>
</dbReference>
<dbReference type="eggNOG" id="KOG0759">
    <property type="taxonomic scope" value="Eukaryota"/>
</dbReference>
<dbReference type="HOGENOM" id="CLU_015166_14_1_1"/>
<dbReference type="InParanoid" id="Q9FY68"/>
<dbReference type="OMA" id="SMPFDIT"/>
<dbReference type="PhylomeDB" id="Q9FY68"/>
<dbReference type="PRO" id="PR:Q9FY68"/>
<dbReference type="Proteomes" id="UP000006548">
    <property type="component" value="Chromosome 5"/>
</dbReference>
<dbReference type="ExpressionAtlas" id="Q9FY68">
    <property type="expression patterns" value="baseline and differential"/>
</dbReference>
<dbReference type="GO" id="GO:0005743">
    <property type="term" value="C:mitochondrial inner membrane"/>
    <property type="evidence" value="ECO:0007669"/>
    <property type="project" value="UniProtKB-SubCell"/>
</dbReference>
<dbReference type="GO" id="GO:0005310">
    <property type="term" value="F:dicarboxylic acid transmembrane transporter activity"/>
    <property type="evidence" value="ECO:0000314"/>
    <property type="project" value="TAIR"/>
</dbReference>
<dbReference type="GO" id="GO:0006839">
    <property type="term" value="P:mitochondrial transport"/>
    <property type="evidence" value="ECO:0000314"/>
    <property type="project" value="TAIR"/>
</dbReference>
<dbReference type="FunFam" id="1.50.40.10:FF:000030">
    <property type="entry name" value="Mitochondrial uncoupling protein 5"/>
    <property type="match status" value="1"/>
</dbReference>
<dbReference type="Gene3D" id="1.50.40.10">
    <property type="entry name" value="Mitochondrial carrier domain"/>
    <property type="match status" value="1"/>
</dbReference>
<dbReference type="InterPro" id="IPR002067">
    <property type="entry name" value="Mit_carrier"/>
</dbReference>
<dbReference type="InterPro" id="IPR050391">
    <property type="entry name" value="Mito_Metabolite_Transporter"/>
</dbReference>
<dbReference type="InterPro" id="IPR018108">
    <property type="entry name" value="Mitochondrial_sb/sol_carrier"/>
</dbReference>
<dbReference type="InterPro" id="IPR023395">
    <property type="entry name" value="Mt_carrier_dom_sf"/>
</dbReference>
<dbReference type="PANTHER" id="PTHR45618">
    <property type="entry name" value="MITOCHONDRIAL DICARBOXYLATE CARRIER-RELATED"/>
    <property type="match status" value="1"/>
</dbReference>
<dbReference type="Pfam" id="PF00153">
    <property type="entry name" value="Mito_carr"/>
    <property type="match status" value="4"/>
</dbReference>
<dbReference type="PRINTS" id="PR00926">
    <property type="entry name" value="MITOCARRIER"/>
</dbReference>
<dbReference type="SUPFAM" id="SSF103506">
    <property type="entry name" value="Mitochondrial carrier"/>
    <property type="match status" value="1"/>
</dbReference>
<dbReference type="PROSITE" id="PS50920">
    <property type="entry name" value="SOLCAR"/>
    <property type="match status" value="3"/>
</dbReference>
<organism>
    <name type="scientific">Arabidopsis thaliana</name>
    <name type="common">Mouse-ear cress</name>
    <dbReference type="NCBI Taxonomy" id="3702"/>
    <lineage>
        <taxon>Eukaryota</taxon>
        <taxon>Viridiplantae</taxon>
        <taxon>Streptophyta</taxon>
        <taxon>Embryophyta</taxon>
        <taxon>Tracheophyta</taxon>
        <taxon>Spermatophyta</taxon>
        <taxon>Magnoliopsida</taxon>
        <taxon>eudicotyledons</taxon>
        <taxon>Gunneridae</taxon>
        <taxon>Pentapetalae</taxon>
        <taxon>rosids</taxon>
        <taxon>malvids</taxon>
        <taxon>Brassicales</taxon>
        <taxon>Brassicaceae</taxon>
        <taxon>Camelineae</taxon>
        <taxon>Arabidopsis</taxon>
    </lineage>
</organism>
<protein>
    <recommendedName>
        <fullName>Mitochondrial uncoupling protein 6</fullName>
        <shortName>AtPUMP6</shortName>
    </recommendedName>
    <alternativeName>
        <fullName>Mitochondrial dicarboxylate carrier 3</fullName>
    </alternativeName>
</protein>
<sequence>MGFKPFLEGGIAAIIAGALTHPLDLIKVRMQLQGEHSFSLDQNPNPNLSLDHNLPVKPYRPVFALDSLIGSISLLPLHIHAPSSSTRSVMTPFAVGAHIVKTEGPAALFSGVSATILRQMLYSATRMGIYDFLKRRWTDQLTGNFPLVTKITAGLIAGAVGSVVGNPADVAMVRMQADGSLPLNRRRNYKSVVDAIDRIARQEGVSSLWRGSWLTVNRAMIVTASQLATYDHVKEILVAGGRGTPGGIGTHVAASFAAGIVAAVASNPIDVVKTRMMNADKEIYGGPLDCAVKMVAEEGPMALYKGLVPTATRQGPFTMILFLTLEQVRGLLKDVKF</sequence>
<name>PUMP6_ARATH</name>
<proteinExistence type="evidence at transcript level"/>
<feature type="chain" id="PRO_0000420260" description="Mitochondrial uncoupling protein 6">
    <location>
        <begin position="1"/>
        <end position="337"/>
    </location>
</feature>
<feature type="transmembrane region" description="Helical; Name=1" evidence="2">
    <location>
        <begin position="6"/>
        <end position="26"/>
    </location>
</feature>
<feature type="transmembrane region" description="Helical; Name=2" evidence="2">
    <location>
        <begin position="105"/>
        <end position="125"/>
    </location>
</feature>
<feature type="transmembrane region" description="Helical; Name=3" evidence="2">
    <location>
        <begin position="151"/>
        <end position="171"/>
    </location>
</feature>
<feature type="transmembrane region" description="Helical; Name=4" evidence="2">
    <location>
        <begin position="210"/>
        <end position="230"/>
    </location>
</feature>
<feature type="transmembrane region" description="Helical; Name=5" evidence="2">
    <location>
        <begin position="252"/>
        <end position="272"/>
    </location>
</feature>
<feature type="transmembrane region" description="Helical; Name=6" evidence="2">
    <location>
        <begin position="304"/>
        <end position="324"/>
    </location>
</feature>
<feature type="repeat" description="Solcar 1">
    <location>
        <begin position="4"/>
        <end position="136"/>
    </location>
</feature>
<feature type="repeat" description="Solcar 2">
    <location>
        <begin position="145"/>
        <end position="236"/>
    </location>
</feature>
<feature type="repeat" description="Solcar 3">
    <location>
        <begin position="246"/>
        <end position="331"/>
    </location>
</feature>